<name>LIVH_ECOLI</name>
<keyword id="KW-0029">Amino-acid transport</keyword>
<keyword id="KW-0997">Cell inner membrane</keyword>
<keyword id="KW-1003">Cell membrane</keyword>
<keyword id="KW-0472">Membrane</keyword>
<keyword id="KW-1185">Reference proteome</keyword>
<keyword id="KW-0812">Transmembrane</keyword>
<keyword id="KW-1133">Transmembrane helix</keyword>
<keyword id="KW-0813">Transport</keyword>
<sequence length="308" mass="32982">MSEQFLYFLQQMFNGVTLGSTYALIAIGYTMVYGIIGMINFAHGEVYMIGSYVSFMIIAALMMMGIDTGWLLVAAGFVGAIVIASAYGWSIERVAYRPVRNSKRLIALISAIGMSIFLQNYVSLTEGSRDVALPSLFNGQWVVGHSENFSASITTMQAVIWIVTFLAMLALTIFIRYSRMGRACRACAEDLKMASLLGINTDRVIALTFVIGAAMAAVAGVLLGQFYGVINPYIGFMAGMKAFTAAVLGGIGSIPGAMIGGLILGIAEALSSAYLSTEYKDVVSFALLILVLLVMPTGILGRPEVEKV</sequence>
<organism>
    <name type="scientific">Escherichia coli (strain K12)</name>
    <dbReference type="NCBI Taxonomy" id="83333"/>
    <lineage>
        <taxon>Bacteria</taxon>
        <taxon>Pseudomonadati</taxon>
        <taxon>Pseudomonadota</taxon>
        <taxon>Gammaproteobacteria</taxon>
        <taxon>Enterobacterales</taxon>
        <taxon>Enterobacteriaceae</taxon>
        <taxon>Escherichia</taxon>
    </lineage>
</organism>
<protein>
    <recommendedName>
        <fullName>High-affinity branched-chain amino acid transport system permease protein LivH</fullName>
    </recommendedName>
    <alternativeName>
        <fullName>LIV-I protein H</fullName>
    </alternativeName>
</protein>
<feature type="chain" id="PRO_0000060058" description="High-affinity branched-chain amino acid transport system permease protein LivH">
    <location>
        <begin position="1"/>
        <end position="308"/>
    </location>
</feature>
<feature type="topological domain" description="Cytoplasmic" evidence="1">
    <location>
        <begin position="1"/>
        <end position="21"/>
    </location>
</feature>
<feature type="transmembrane region" description="Helical" evidence="1">
    <location>
        <begin position="22"/>
        <end position="42"/>
    </location>
</feature>
<feature type="topological domain" description="Periplasmic" evidence="1">
    <location>
        <begin position="43"/>
        <end position="45"/>
    </location>
</feature>
<feature type="transmembrane region" description="Helical" evidence="1">
    <location>
        <begin position="46"/>
        <end position="66"/>
    </location>
</feature>
<feature type="topological domain" description="Cytoplasmic" evidence="1">
    <location>
        <begin position="67"/>
        <end position="68"/>
    </location>
</feature>
<feature type="transmembrane region" description="Helical" evidence="1">
    <location>
        <begin position="69"/>
        <end position="89"/>
    </location>
</feature>
<feature type="topological domain" description="Periplasmic" evidence="1">
    <location>
        <begin position="90"/>
        <end position="104"/>
    </location>
</feature>
<feature type="transmembrane region" description="Helical" evidence="1">
    <location>
        <begin position="105"/>
        <end position="125"/>
    </location>
</feature>
<feature type="topological domain" description="Cytoplasmic" evidence="1">
    <location>
        <begin position="126"/>
        <end position="154"/>
    </location>
</feature>
<feature type="transmembrane region" description="Helical" evidence="1">
    <location>
        <begin position="155"/>
        <end position="175"/>
    </location>
</feature>
<feature type="topological domain" description="Periplasmic" evidence="1">
    <location>
        <begin position="176"/>
        <end position="203"/>
    </location>
</feature>
<feature type="transmembrane region" description="Helical" evidence="1">
    <location>
        <begin position="204"/>
        <end position="224"/>
    </location>
</feature>
<feature type="topological domain" description="Cytoplasmic" evidence="1">
    <location>
        <begin position="225"/>
        <end position="245"/>
    </location>
</feature>
<feature type="transmembrane region" description="Helical" evidence="1">
    <location>
        <begin position="246"/>
        <end position="266"/>
    </location>
</feature>
<feature type="topological domain" description="Periplasmic" evidence="1">
    <location>
        <begin position="267"/>
        <end position="280"/>
    </location>
</feature>
<feature type="transmembrane region" description="Helical" evidence="1">
    <location>
        <begin position="281"/>
        <end position="301"/>
    </location>
</feature>
<feature type="topological domain" description="Cytoplasmic" evidence="1">
    <location>
        <begin position="302"/>
        <end position="308"/>
    </location>
</feature>
<feature type="sequence conflict" description="In Ref. 1 and 2." evidence="2" ref="1 2">
    <original>S</original>
    <variation>G</variation>
    <location>
        <position position="253"/>
    </location>
</feature>
<feature type="sequence conflict" description="In Ref. 1 and 2." evidence="2" ref="1 2">
    <original>L</original>
    <variation>P</variation>
    <location>
        <position position="288"/>
    </location>
</feature>
<gene>
    <name type="primary">livH</name>
    <name type="ordered locus">b3457</name>
    <name type="ordered locus">JW3422</name>
</gene>
<comment type="function">
    <text>Part of the binding-protein-dependent transport system for branched-chain amino acids. Probably responsible for the translocation of the substrates across the membrane.</text>
</comment>
<comment type="subcellular location">
    <subcellularLocation>
        <location>Cell inner membrane</location>
        <topology>Multi-pass membrane protein</topology>
    </subcellularLocation>
</comment>
<comment type="similarity">
    <text evidence="2">Belongs to the binding-protein-dependent transport system permease family. LivHM subfamily.</text>
</comment>
<reference key="1">
    <citation type="journal article" date="1986" name="J. Bacteriol.">
        <title>Cloning and characterization of livH, the structural gene encoding a component of the leucine transport system in Escherichia coli.</title>
        <authorList>
            <person name="Nazos P.M."/>
            <person name="Antonucci T.K."/>
            <person name="Landick R."/>
            <person name="Oxender D.L."/>
        </authorList>
    </citation>
    <scope>NUCLEOTIDE SEQUENCE [GENOMIC DNA]</scope>
</reference>
<reference key="2">
    <citation type="journal article" date="1990" name="J. Biol. Chem.">
        <title>Nucleotide sequence and genetic characterization reveal six essential genes for the LIV-I and LS transport systems of Escherichia coli.</title>
        <authorList>
            <person name="Adams M.D."/>
            <person name="Wagner L.M."/>
            <person name="Graddis T.J."/>
            <person name="Landick R."/>
            <person name="Antonucci T.K."/>
            <person name="Gibson A.L."/>
            <person name="Oxender D.L."/>
        </authorList>
    </citation>
    <scope>NUCLEOTIDE SEQUENCE [GENOMIC DNA]</scope>
</reference>
<reference key="3">
    <citation type="journal article" date="1994" name="Nucleic Acids Res.">
        <title>Analysis of the Escherichia coli genome. V. DNA sequence of the region from 76.0 to 81.5 minutes.</title>
        <authorList>
            <person name="Sofia H.J."/>
            <person name="Burland V."/>
            <person name="Daniels D.L."/>
            <person name="Plunkett G. III"/>
            <person name="Blattner F.R."/>
        </authorList>
    </citation>
    <scope>NUCLEOTIDE SEQUENCE [LARGE SCALE GENOMIC DNA]</scope>
    <source>
        <strain>K12 / MG1655 / ATCC 47076</strain>
    </source>
</reference>
<reference key="4">
    <citation type="journal article" date="1997" name="Science">
        <title>The complete genome sequence of Escherichia coli K-12.</title>
        <authorList>
            <person name="Blattner F.R."/>
            <person name="Plunkett G. III"/>
            <person name="Bloch C.A."/>
            <person name="Perna N.T."/>
            <person name="Burland V."/>
            <person name="Riley M."/>
            <person name="Collado-Vides J."/>
            <person name="Glasner J.D."/>
            <person name="Rode C.K."/>
            <person name="Mayhew G.F."/>
            <person name="Gregor J."/>
            <person name="Davis N.W."/>
            <person name="Kirkpatrick H.A."/>
            <person name="Goeden M.A."/>
            <person name="Rose D.J."/>
            <person name="Mau B."/>
            <person name="Shao Y."/>
        </authorList>
    </citation>
    <scope>NUCLEOTIDE SEQUENCE [LARGE SCALE GENOMIC DNA]</scope>
    <source>
        <strain>K12 / MG1655 / ATCC 47076</strain>
    </source>
</reference>
<reference key="5">
    <citation type="journal article" date="2006" name="Mol. Syst. Biol.">
        <title>Highly accurate genome sequences of Escherichia coli K-12 strains MG1655 and W3110.</title>
        <authorList>
            <person name="Hayashi K."/>
            <person name="Morooka N."/>
            <person name="Yamamoto Y."/>
            <person name="Fujita K."/>
            <person name="Isono K."/>
            <person name="Choi S."/>
            <person name="Ohtsubo E."/>
            <person name="Baba T."/>
            <person name="Wanner B.L."/>
            <person name="Mori H."/>
            <person name="Horiuchi T."/>
        </authorList>
    </citation>
    <scope>NUCLEOTIDE SEQUENCE [LARGE SCALE GENOMIC DNA]</scope>
    <source>
        <strain>K12 / W3110 / ATCC 27325 / DSM 5911</strain>
    </source>
</reference>
<reference key="6">
    <citation type="journal article" date="2005" name="Science">
        <title>Global topology analysis of the Escherichia coli inner membrane proteome.</title>
        <authorList>
            <person name="Daley D.O."/>
            <person name="Rapp M."/>
            <person name="Granseth E."/>
            <person name="Melen K."/>
            <person name="Drew D."/>
            <person name="von Heijne G."/>
        </authorList>
    </citation>
    <scope>TOPOLOGY [LARGE SCALE ANALYSIS]</scope>
    <source>
        <strain>K12 / MG1655 / ATCC 47076</strain>
    </source>
</reference>
<proteinExistence type="evidence at protein level"/>
<dbReference type="EMBL" id="J05516">
    <property type="protein sequence ID" value="AAA83884.1"/>
    <property type="molecule type" value="Genomic_DNA"/>
</dbReference>
<dbReference type="EMBL" id="U00039">
    <property type="protein sequence ID" value="AAB18432.1"/>
    <property type="molecule type" value="Genomic_DNA"/>
</dbReference>
<dbReference type="EMBL" id="U00096">
    <property type="protein sequence ID" value="AAC76482.1"/>
    <property type="molecule type" value="Genomic_DNA"/>
</dbReference>
<dbReference type="EMBL" id="AP009048">
    <property type="protein sequence ID" value="BAE77836.1"/>
    <property type="molecule type" value="Genomic_DNA"/>
</dbReference>
<dbReference type="PIR" id="S47676">
    <property type="entry name" value="QRECLH"/>
</dbReference>
<dbReference type="RefSeq" id="NP_417914.1">
    <property type="nucleotide sequence ID" value="NC_000913.3"/>
</dbReference>
<dbReference type="RefSeq" id="WP_001295111.1">
    <property type="nucleotide sequence ID" value="NZ_SSZK01000008.1"/>
</dbReference>
<dbReference type="BioGRID" id="4262494">
    <property type="interactions" value="24"/>
</dbReference>
<dbReference type="ComplexPortal" id="CPX-4316">
    <property type="entry name" value="Branched chain amino acid ABC transporter complex"/>
</dbReference>
<dbReference type="ComplexPortal" id="CPX-4317">
    <property type="entry name" value="Branched chain amino acid, leucine-specific ABC transporter complex"/>
</dbReference>
<dbReference type="FunCoup" id="P0AEX7">
    <property type="interactions" value="483"/>
</dbReference>
<dbReference type="STRING" id="511145.b3457"/>
<dbReference type="TCDB" id="3.A.1.4.1">
    <property type="family name" value="the atp-binding cassette (abc) superfamily"/>
</dbReference>
<dbReference type="PaxDb" id="511145-b3457"/>
<dbReference type="EnsemblBacteria" id="AAC76482">
    <property type="protein sequence ID" value="AAC76482"/>
    <property type="gene ID" value="b3457"/>
</dbReference>
<dbReference type="GeneID" id="93778534"/>
<dbReference type="GeneID" id="947965"/>
<dbReference type="KEGG" id="ecj:JW3422"/>
<dbReference type="KEGG" id="eco:b3457"/>
<dbReference type="KEGG" id="ecoc:C3026_18725"/>
<dbReference type="PATRIC" id="fig|1411691.4.peg.3269"/>
<dbReference type="EchoBASE" id="EB0533"/>
<dbReference type="eggNOG" id="COG0559">
    <property type="taxonomic scope" value="Bacteria"/>
</dbReference>
<dbReference type="HOGENOM" id="CLU_039929_3_1_6"/>
<dbReference type="InParanoid" id="P0AEX7"/>
<dbReference type="OMA" id="NMGWFLI"/>
<dbReference type="OrthoDB" id="9807115at2"/>
<dbReference type="PhylomeDB" id="P0AEX7"/>
<dbReference type="BioCyc" id="EcoCyc:LIVH-MONOMER"/>
<dbReference type="BioCyc" id="MetaCyc:LIVH-MONOMER"/>
<dbReference type="PRO" id="PR:P0AEX7"/>
<dbReference type="Proteomes" id="UP000000625">
    <property type="component" value="Chromosome"/>
</dbReference>
<dbReference type="GO" id="GO:0055052">
    <property type="term" value="C:ATP-binding cassette (ABC) transporter complex, substrate-binding subunit-containing"/>
    <property type="evidence" value="ECO:0000303"/>
    <property type="project" value="ComplexPortal"/>
</dbReference>
<dbReference type="GO" id="GO:0016020">
    <property type="term" value="C:membrane"/>
    <property type="evidence" value="ECO:0000303"/>
    <property type="project" value="ComplexPortal"/>
</dbReference>
<dbReference type="GO" id="GO:0005886">
    <property type="term" value="C:plasma membrane"/>
    <property type="evidence" value="ECO:0000314"/>
    <property type="project" value="EcoCyc"/>
</dbReference>
<dbReference type="GO" id="GO:0015658">
    <property type="term" value="F:branched-chain amino acid transmembrane transporter activity"/>
    <property type="evidence" value="ECO:0000315"/>
    <property type="project" value="EcoCyc"/>
</dbReference>
<dbReference type="GO" id="GO:0015188">
    <property type="term" value="F:L-isoleucine transmembrane transporter activity"/>
    <property type="evidence" value="ECO:0000315"/>
    <property type="project" value="EcoCyc"/>
</dbReference>
<dbReference type="GO" id="GO:0015190">
    <property type="term" value="F:L-leucine transmembrane transporter activity"/>
    <property type="evidence" value="ECO:0000315"/>
    <property type="project" value="EcoCyc"/>
</dbReference>
<dbReference type="GO" id="GO:0015192">
    <property type="term" value="F:L-phenylalanine transmembrane transporter activity"/>
    <property type="evidence" value="ECO:0000314"/>
    <property type="project" value="EcoCyc"/>
</dbReference>
<dbReference type="GO" id="GO:0005304">
    <property type="term" value="F:L-valine transmembrane transporter activity"/>
    <property type="evidence" value="ECO:0000315"/>
    <property type="project" value="EcoCyc"/>
</dbReference>
<dbReference type="GO" id="GO:0015803">
    <property type="term" value="P:branched-chain amino acid transport"/>
    <property type="evidence" value="ECO:0000315"/>
    <property type="project" value="EcoCyc"/>
</dbReference>
<dbReference type="GO" id="GO:0042941">
    <property type="term" value="P:D-alanine transmembrane transport"/>
    <property type="evidence" value="ECO:0000318"/>
    <property type="project" value="GO_Central"/>
</dbReference>
<dbReference type="GO" id="GO:1903714">
    <property type="term" value="P:isoleucine transmembrane transport"/>
    <property type="evidence" value="ECO:0000315"/>
    <property type="project" value="EcoCyc"/>
</dbReference>
<dbReference type="GO" id="GO:0015808">
    <property type="term" value="P:L-alanine transport"/>
    <property type="evidence" value="ECO:0000318"/>
    <property type="project" value="GO_Central"/>
</dbReference>
<dbReference type="GO" id="GO:1903806">
    <property type="term" value="P:L-isoleucine import across plasma membrane"/>
    <property type="evidence" value="ECO:0000318"/>
    <property type="project" value="GO_Central"/>
</dbReference>
<dbReference type="GO" id="GO:1903801">
    <property type="term" value="P:L-leucine import across plasma membrane"/>
    <property type="evidence" value="ECO:0000315"/>
    <property type="project" value="EcoCyc"/>
</dbReference>
<dbReference type="GO" id="GO:1903785">
    <property type="term" value="P:L-valine transmembrane transport"/>
    <property type="evidence" value="ECO:0000315"/>
    <property type="project" value="EcoCyc"/>
</dbReference>
<dbReference type="GO" id="GO:0015823">
    <property type="term" value="P:phenylalanine transport"/>
    <property type="evidence" value="ECO:0000314"/>
    <property type="project" value="EcoCyc"/>
</dbReference>
<dbReference type="CDD" id="cd06582">
    <property type="entry name" value="TM_PBP1_LivH_like"/>
    <property type="match status" value="1"/>
</dbReference>
<dbReference type="InterPro" id="IPR001851">
    <property type="entry name" value="ABC_transp_permease"/>
</dbReference>
<dbReference type="InterPro" id="IPR052157">
    <property type="entry name" value="BCAA_transport_permease"/>
</dbReference>
<dbReference type="NCBIfam" id="NF008011">
    <property type="entry name" value="PRK10740.1"/>
    <property type="match status" value="1"/>
</dbReference>
<dbReference type="PANTHER" id="PTHR11795">
    <property type="entry name" value="BRANCHED-CHAIN AMINO ACID TRANSPORT SYSTEM PERMEASE PROTEIN LIVH"/>
    <property type="match status" value="1"/>
</dbReference>
<dbReference type="PANTHER" id="PTHR11795:SF371">
    <property type="entry name" value="HIGH-AFFINITY BRANCHED-CHAIN AMINO ACID TRANSPORT SYSTEM PERMEASE PROTEIN LIVH"/>
    <property type="match status" value="1"/>
</dbReference>
<dbReference type="Pfam" id="PF02653">
    <property type="entry name" value="BPD_transp_2"/>
    <property type="match status" value="1"/>
</dbReference>
<evidence type="ECO:0000255" key="1"/>
<evidence type="ECO:0000305" key="2"/>
<accession>P0AEX7</accession>
<accession>P08340</accession>
<accession>Q2M7C0</accession>